<organism>
    <name type="scientific">Paraburkholderia phytofirmans (strain DSM 17436 / LMG 22146 / PsJN)</name>
    <name type="common">Burkholderia phytofirmans</name>
    <dbReference type="NCBI Taxonomy" id="398527"/>
    <lineage>
        <taxon>Bacteria</taxon>
        <taxon>Pseudomonadati</taxon>
        <taxon>Pseudomonadota</taxon>
        <taxon>Betaproteobacteria</taxon>
        <taxon>Burkholderiales</taxon>
        <taxon>Burkholderiaceae</taxon>
        <taxon>Paraburkholderia</taxon>
    </lineage>
</organism>
<reference key="1">
    <citation type="journal article" date="2011" name="J. Bacteriol.">
        <title>Complete genome sequence of the plant growth-promoting endophyte Burkholderia phytofirmans strain PsJN.</title>
        <authorList>
            <person name="Weilharter A."/>
            <person name="Mitter B."/>
            <person name="Shin M.V."/>
            <person name="Chain P.S."/>
            <person name="Nowak J."/>
            <person name="Sessitsch A."/>
        </authorList>
    </citation>
    <scope>NUCLEOTIDE SEQUENCE [LARGE SCALE GENOMIC DNA]</scope>
    <source>
        <strain>DSM 17436 / LMG 22146 / PsJN</strain>
    </source>
</reference>
<proteinExistence type="inferred from homology"/>
<name>SERC_PARPJ</name>
<keyword id="KW-0028">Amino-acid biosynthesis</keyword>
<keyword id="KW-0032">Aminotransferase</keyword>
<keyword id="KW-0963">Cytoplasm</keyword>
<keyword id="KW-0663">Pyridoxal phosphate</keyword>
<keyword id="KW-0664">Pyridoxine biosynthesis</keyword>
<keyword id="KW-0718">Serine biosynthesis</keyword>
<keyword id="KW-0808">Transferase</keyword>
<sequence length="360" mass="39613">MRVFNFSAGPAAMPEEVLRQAADEMLDWQGSGMSVMEMSHRGKEFMSIHEEALVDLRDLLEVPASHRILFLQGGGLGENAIVPMNLMGAKPRADFVVTGSWSQKSFKEAQKYGTVHLAASGQTAEGFTRAPARSEWQLSDDPAYVHLCTNETIHGVETFEIPDLGDIPLVADASSHILSRPMDIAKYGVLFGGAQKNIGMAGVTVVIVREDMLDRAQSICPSAFEWKTVAENNSMYNTPPTYAIYIAGLVFKWLKKQGGLAAMEARNVEKSKLLYDAVDTSSFYLNKVERGSRSRMNVPFFLADESRNEDFLAGAKARGMVQLKGHKSVGGMRASIYNAVPLEGVKALVEYMKEFEQRSA</sequence>
<comment type="function">
    <text evidence="1">Catalyzes the reversible conversion of 3-phosphohydroxypyruvate to phosphoserine and of 3-hydroxy-2-oxo-4-phosphonooxybutanoate to phosphohydroxythreonine.</text>
</comment>
<comment type="catalytic activity">
    <reaction evidence="1">
        <text>O-phospho-L-serine + 2-oxoglutarate = 3-phosphooxypyruvate + L-glutamate</text>
        <dbReference type="Rhea" id="RHEA:14329"/>
        <dbReference type="ChEBI" id="CHEBI:16810"/>
        <dbReference type="ChEBI" id="CHEBI:18110"/>
        <dbReference type="ChEBI" id="CHEBI:29985"/>
        <dbReference type="ChEBI" id="CHEBI:57524"/>
        <dbReference type="EC" id="2.6.1.52"/>
    </reaction>
</comment>
<comment type="catalytic activity">
    <reaction evidence="1">
        <text>4-(phosphooxy)-L-threonine + 2-oxoglutarate = (R)-3-hydroxy-2-oxo-4-phosphooxybutanoate + L-glutamate</text>
        <dbReference type="Rhea" id="RHEA:16573"/>
        <dbReference type="ChEBI" id="CHEBI:16810"/>
        <dbReference type="ChEBI" id="CHEBI:29985"/>
        <dbReference type="ChEBI" id="CHEBI:58452"/>
        <dbReference type="ChEBI" id="CHEBI:58538"/>
        <dbReference type="EC" id="2.6.1.52"/>
    </reaction>
</comment>
<comment type="cofactor">
    <cofactor evidence="1">
        <name>pyridoxal 5'-phosphate</name>
        <dbReference type="ChEBI" id="CHEBI:597326"/>
    </cofactor>
    <text evidence="1">Binds 1 pyridoxal phosphate per subunit.</text>
</comment>
<comment type="pathway">
    <text evidence="1">Amino-acid biosynthesis; L-serine biosynthesis; L-serine from 3-phospho-D-glycerate: step 2/3.</text>
</comment>
<comment type="pathway">
    <text evidence="1">Cofactor biosynthesis; pyridoxine 5'-phosphate biosynthesis; pyridoxine 5'-phosphate from D-erythrose 4-phosphate: step 3/5.</text>
</comment>
<comment type="subunit">
    <text evidence="1">Homodimer.</text>
</comment>
<comment type="subcellular location">
    <subcellularLocation>
        <location evidence="1">Cytoplasm</location>
    </subcellularLocation>
</comment>
<comment type="similarity">
    <text evidence="1">Belongs to the class-V pyridoxal-phosphate-dependent aminotransferase family. SerC subfamily.</text>
</comment>
<gene>
    <name evidence="1" type="primary">serC</name>
    <name type="ordered locus">Bphyt_3007</name>
</gene>
<evidence type="ECO:0000255" key="1">
    <source>
        <dbReference type="HAMAP-Rule" id="MF_00160"/>
    </source>
</evidence>
<protein>
    <recommendedName>
        <fullName evidence="1">Phosphoserine aminotransferase</fullName>
        <ecNumber evidence="1">2.6.1.52</ecNumber>
    </recommendedName>
    <alternativeName>
        <fullName evidence="1">Phosphohydroxythreonine aminotransferase</fullName>
        <shortName evidence="1">PSAT</shortName>
    </alternativeName>
</protein>
<dbReference type="EC" id="2.6.1.52" evidence="1"/>
<dbReference type="EMBL" id="CP001052">
    <property type="protein sequence ID" value="ACD17401.1"/>
    <property type="molecule type" value="Genomic_DNA"/>
</dbReference>
<dbReference type="RefSeq" id="WP_012433980.1">
    <property type="nucleotide sequence ID" value="NC_010681.1"/>
</dbReference>
<dbReference type="SMR" id="B2T637"/>
<dbReference type="STRING" id="398527.Bphyt_3007"/>
<dbReference type="KEGG" id="bpy:Bphyt_3007"/>
<dbReference type="eggNOG" id="COG1932">
    <property type="taxonomic scope" value="Bacteria"/>
</dbReference>
<dbReference type="HOGENOM" id="CLU_034866_0_2_4"/>
<dbReference type="OrthoDB" id="9809412at2"/>
<dbReference type="UniPathway" id="UPA00135">
    <property type="reaction ID" value="UER00197"/>
</dbReference>
<dbReference type="UniPathway" id="UPA00244">
    <property type="reaction ID" value="UER00311"/>
</dbReference>
<dbReference type="Proteomes" id="UP000001739">
    <property type="component" value="Chromosome 1"/>
</dbReference>
<dbReference type="GO" id="GO:0005737">
    <property type="term" value="C:cytoplasm"/>
    <property type="evidence" value="ECO:0007669"/>
    <property type="project" value="UniProtKB-SubCell"/>
</dbReference>
<dbReference type="GO" id="GO:0004648">
    <property type="term" value="F:O-phospho-L-serine:2-oxoglutarate aminotransferase activity"/>
    <property type="evidence" value="ECO:0007669"/>
    <property type="project" value="UniProtKB-UniRule"/>
</dbReference>
<dbReference type="GO" id="GO:0030170">
    <property type="term" value="F:pyridoxal phosphate binding"/>
    <property type="evidence" value="ECO:0007669"/>
    <property type="project" value="UniProtKB-UniRule"/>
</dbReference>
<dbReference type="GO" id="GO:0006564">
    <property type="term" value="P:L-serine biosynthetic process"/>
    <property type="evidence" value="ECO:0007669"/>
    <property type="project" value="UniProtKB-UniRule"/>
</dbReference>
<dbReference type="GO" id="GO:0008615">
    <property type="term" value="P:pyridoxine biosynthetic process"/>
    <property type="evidence" value="ECO:0007669"/>
    <property type="project" value="UniProtKB-UniRule"/>
</dbReference>
<dbReference type="CDD" id="cd00611">
    <property type="entry name" value="PSAT_like"/>
    <property type="match status" value="1"/>
</dbReference>
<dbReference type="FunFam" id="3.40.640.10:FF:000010">
    <property type="entry name" value="Phosphoserine aminotransferase"/>
    <property type="match status" value="1"/>
</dbReference>
<dbReference type="FunFam" id="3.90.1150.10:FF:000006">
    <property type="entry name" value="Phosphoserine aminotransferase"/>
    <property type="match status" value="1"/>
</dbReference>
<dbReference type="Gene3D" id="3.90.1150.10">
    <property type="entry name" value="Aspartate Aminotransferase, domain 1"/>
    <property type="match status" value="1"/>
</dbReference>
<dbReference type="Gene3D" id="3.40.640.10">
    <property type="entry name" value="Type I PLP-dependent aspartate aminotransferase-like (Major domain)"/>
    <property type="match status" value="1"/>
</dbReference>
<dbReference type="HAMAP" id="MF_00160">
    <property type="entry name" value="SerC_aminotrans_5"/>
    <property type="match status" value="1"/>
</dbReference>
<dbReference type="InterPro" id="IPR000192">
    <property type="entry name" value="Aminotrans_V_dom"/>
</dbReference>
<dbReference type="InterPro" id="IPR020578">
    <property type="entry name" value="Aminotrans_V_PyrdxlP_BS"/>
</dbReference>
<dbReference type="InterPro" id="IPR022278">
    <property type="entry name" value="Pser_aminoTfrase"/>
</dbReference>
<dbReference type="InterPro" id="IPR015424">
    <property type="entry name" value="PyrdxlP-dep_Trfase"/>
</dbReference>
<dbReference type="InterPro" id="IPR015421">
    <property type="entry name" value="PyrdxlP-dep_Trfase_major"/>
</dbReference>
<dbReference type="InterPro" id="IPR015422">
    <property type="entry name" value="PyrdxlP-dep_Trfase_small"/>
</dbReference>
<dbReference type="NCBIfam" id="NF003764">
    <property type="entry name" value="PRK05355.1"/>
    <property type="match status" value="1"/>
</dbReference>
<dbReference type="NCBIfam" id="TIGR01364">
    <property type="entry name" value="serC_1"/>
    <property type="match status" value="1"/>
</dbReference>
<dbReference type="PANTHER" id="PTHR43247">
    <property type="entry name" value="PHOSPHOSERINE AMINOTRANSFERASE"/>
    <property type="match status" value="1"/>
</dbReference>
<dbReference type="PANTHER" id="PTHR43247:SF1">
    <property type="entry name" value="PHOSPHOSERINE AMINOTRANSFERASE"/>
    <property type="match status" value="1"/>
</dbReference>
<dbReference type="Pfam" id="PF00266">
    <property type="entry name" value="Aminotran_5"/>
    <property type="match status" value="1"/>
</dbReference>
<dbReference type="PIRSF" id="PIRSF000525">
    <property type="entry name" value="SerC"/>
    <property type="match status" value="1"/>
</dbReference>
<dbReference type="SUPFAM" id="SSF53383">
    <property type="entry name" value="PLP-dependent transferases"/>
    <property type="match status" value="1"/>
</dbReference>
<dbReference type="PROSITE" id="PS00595">
    <property type="entry name" value="AA_TRANSFER_CLASS_5"/>
    <property type="match status" value="1"/>
</dbReference>
<accession>B2T637</accession>
<feature type="chain" id="PRO_1000097209" description="Phosphoserine aminotransferase">
    <location>
        <begin position="1"/>
        <end position="360"/>
    </location>
</feature>
<feature type="binding site" evidence="1">
    <location>
        <position position="41"/>
    </location>
    <ligand>
        <name>L-glutamate</name>
        <dbReference type="ChEBI" id="CHEBI:29985"/>
    </ligand>
</feature>
<feature type="binding site" evidence="1">
    <location>
        <position position="101"/>
    </location>
    <ligand>
        <name>pyridoxal 5'-phosphate</name>
        <dbReference type="ChEBI" id="CHEBI:597326"/>
    </ligand>
</feature>
<feature type="binding site" evidence="1">
    <location>
        <position position="152"/>
    </location>
    <ligand>
        <name>pyridoxal 5'-phosphate</name>
        <dbReference type="ChEBI" id="CHEBI:597326"/>
    </ligand>
</feature>
<feature type="binding site" evidence="1">
    <location>
        <position position="172"/>
    </location>
    <ligand>
        <name>pyridoxal 5'-phosphate</name>
        <dbReference type="ChEBI" id="CHEBI:597326"/>
    </ligand>
</feature>
<feature type="binding site" evidence="1">
    <location>
        <position position="195"/>
    </location>
    <ligand>
        <name>pyridoxal 5'-phosphate</name>
        <dbReference type="ChEBI" id="CHEBI:597326"/>
    </ligand>
</feature>
<feature type="binding site" evidence="1">
    <location>
        <begin position="237"/>
        <end position="238"/>
    </location>
    <ligand>
        <name>pyridoxal 5'-phosphate</name>
        <dbReference type="ChEBI" id="CHEBI:597326"/>
    </ligand>
</feature>
<feature type="modified residue" description="N6-(pyridoxal phosphate)lysine" evidence="1">
    <location>
        <position position="196"/>
    </location>
</feature>